<protein>
    <recommendedName>
        <fullName evidence="1">Soluble pyridine nucleotide transhydrogenase</fullName>
        <shortName evidence="1">STH</shortName>
        <ecNumber evidence="1">1.6.1.1</ecNumber>
    </recommendedName>
    <alternativeName>
        <fullName evidence="1">NAD(P)(+) transhydrogenase [B-specific]</fullName>
    </alternativeName>
</protein>
<reference key="1">
    <citation type="journal article" date="2007" name="Proc. Natl. Acad. Sci. U.S.A.">
        <title>Genome plasticity of BCG and impact on vaccine efficacy.</title>
        <authorList>
            <person name="Brosch R."/>
            <person name="Gordon S.V."/>
            <person name="Garnier T."/>
            <person name="Eiglmeier K."/>
            <person name="Frigui W."/>
            <person name="Valenti P."/>
            <person name="Dos Santos S."/>
            <person name="Duthoy S."/>
            <person name="Lacroix C."/>
            <person name="Garcia-Pelayo C."/>
            <person name="Inwald J.K."/>
            <person name="Golby P."/>
            <person name="Garcia J.N."/>
            <person name="Hewinson R.G."/>
            <person name="Behr M.A."/>
            <person name="Quail M.A."/>
            <person name="Churcher C."/>
            <person name="Barrell B.G."/>
            <person name="Parkhill J."/>
            <person name="Cole S.T."/>
        </authorList>
    </citation>
    <scope>NUCLEOTIDE SEQUENCE [LARGE SCALE GENOMIC DNA]</scope>
    <source>
        <strain>BCG / Pasteur 1173P2</strain>
    </source>
</reference>
<dbReference type="EC" id="1.6.1.1" evidence="1"/>
<dbReference type="EMBL" id="AM408590">
    <property type="protein sequence ID" value="CAL72714.1"/>
    <property type="molecule type" value="Genomic_DNA"/>
</dbReference>
<dbReference type="RefSeq" id="WP_003900556.1">
    <property type="nucleotide sequence ID" value="NC_008769.1"/>
</dbReference>
<dbReference type="SMR" id="A1KM51"/>
<dbReference type="GeneID" id="45426700"/>
<dbReference type="KEGG" id="mbb:BCG_2726"/>
<dbReference type="HOGENOM" id="CLU_016755_0_0_11"/>
<dbReference type="Proteomes" id="UP000001472">
    <property type="component" value="Chromosome"/>
</dbReference>
<dbReference type="GO" id="GO:0005829">
    <property type="term" value="C:cytosol"/>
    <property type="evidence" value="ECO:0007669"/>
    <property type="project" value="TreeGrafter"/>
</dbReference>
<dbReference type="GO" id="GO:0004148">
    <property type="term" value="F:dihydrolipoyl dehydrogenase (NADH) activity"/>
    <property type="evidence" value="ECO:0007669"/>
    <property type="project" value="TreeGrafter"/>
</dbReference>
<dbReference type="GO" id="GO:0050660">
    <property type="term" value="F:flavin adenine dinucleotide binding"/>
    <property type="evidence" value="ECO:0007669"/>
    <property type="project" value="TreeGrafter"/>
</dbReference>
<dbReference type="GO" id="GO:0003957">
    <property type="term" value="F:NAD(P)+ transhydrogenase (Si-specific) activity"/>
    <property type="evidence" value="ECO:0007669"/>
    <property type="project" value="UniProtKB-UniRule"/>
</dbReference>
<dbReference type="GO" id="GO:0006103">
    <property type="term" value="P:2-oxoglutarate metabolic process"/>
    <property type="evidence" value="ECO:0007669"/>
    <property type="project" value="TreeGrafter"/>
</dbReference>
<dbReference type="GO" id="GO:0006739">
    <property type="term" value="P:NADP metabolic process"/>
    <property type="evidence" value="ECO:0007669"/>
    <property type="project" value="UniProtKB-UniRule"/>
</dbReference>
<dbReference type="FunFam" id="3.30.390.30:FF:000001">
    <property type="entry name" value="Dihydrolipoyl dehydrogenase"/>
    <property type="match status" value="1"/>
</dbReference>
<dbReference type="FunFam" id="3.50.50.60:FF:000008">
    <property type="entry name" value="Soluble pyridine nucleotide transhydrogenase"/>
    <property type="match status" value="1"/>
</dbReference>
<dbReference type="Gene3D" id="3.30.390.30">
    <property type="match status" value="1"/>
</dbReference>
<dbReference type="Gene3D" id="3.50.50.60">
    <property type="entry name" value="FAD/NAD(P)-binding domain"/>
    <property type="match status" value="2"/>
</dbReference>
<dbReference type="HAMAP" id="MF_00247">
    <property type="entry name" value="SthA"/>
    <property type="match status" value="1"/>
</dbReference>
<dbReference type="InterPro" id="IPR050151">
    <property type="entry name" value="Class-I_Pyr_Nuc-Dis_Oxidored"/>
</dbReference>
<dbReference type="InterPro" id="IPR036188">
    <property type="entry name" value="FAD/NAD-bd_sf"/>
</dbReference>
<dbReference type="InterPro" id="IPR023753">
    <property type="entry name" value="FAD/NAD-binding_dom"/>
</dbReference>
<dbReference type="InterPro" id="IPR016156">
    <property type="entry name" value="FAD/NAD-linked_Rdtase_dimer_sf"/>
</dbReference>
<dbReference type="InterPro" id="IPR001100">
    <property type="entry name" value="Pyr_nuc-diS_OxRdtase"/>
</dbReference>
<dbReference type="InterPro" id="IPR004099">
    <property type="entry name" value="Pyr_nucl-diS_OxRdtase_dimer"/>
</dbReference>
<dbReference type="InterPro" id="IPR022962">
    <property type="entry name" value="STH_gammaproteobact"/>
</dbReference>
<dbReference type="NCBIfam" id="NF003585">
    <property type="entry name" value="PRK05249.1"/>
    <property type="match status" value="1"/>
</dbReference>
<dbReference type="PANTHER" id="PTHR22912">
    <property type="entry name" value="DISULFIDE OXIDOREDUCTASE"/>
    <property type="match status" value="1"/>
</dbReference>
<dbReference type="PANTHER" id="PTHR22912:SF93">
    <property type="entry name" value="SOLUBLE PYRIDINE NUCLEOTIDE TRANSHYDROGENASE"/>
    <property type="match status" value="1"/>
</dbReference>
<dbReference type="Pfam" id="PF07992">
    <property type="entry name" value="Pyr_redox_2"/>
    <property type="match status" value="1"/>
</dbReference>
<dbReference type="Pfam" id="PF02852">
    <property type="entry name" value="Pyr_redox_dim"/>
    <property type="match status" value="1"/>
</dbReference>
<dbReference type="PIRSF" id="PIRSF000350">
    <property type="entry name" value="Mercury_reductase_MerA"/>
    <property type="match status" value="1"/>
</dbReference>
<dbReference type="PRINTS" id="PR00368">
    <property type="entry name" value="FADPNR"/>
</dbReference>
<dbReference type="PRINTS" id="PR00411">
    <property type="entry name" value="PNDRDTASEI"/>
</dbReference>
<dbReference type="SUPFAM" id="SSF51905">
    <property type="entry name" value="FAD/NAD(P)-binding domain"/>
    <property type="match status" value="1"/>
</dbReference>
<dbReference type="SUPFAM" id="SSF55424">
    <property type="entry name" value="FAD/NAD-linked reductases, dimerisation (C-terminal) domain"/>
    <property type="match status" value="1"/>
</dbReference>
<gene>
    <name evidence="1" type="primary">sthA</name>
    <name type="ordered locus">BCG_2726</name>
</gene>
<comment type="function">
    <text evidence="1">Conversion of NADPH, generated by peripheral catabolic pathways, to NADH, which can enter the respiratory chain for energy generation.</text>
</comment>
<comment type="catalytic activity">
    <reaction evidence="1">
        <text>NAD(+) + NADPH = NADH + NADP(+)</text>
        <dbReference type="Rhea" id="RHEA:11692"/>
        <dbReference type="ChEBI" id="CHEBI:57540"/>
        <dbReference type="ChEBI" id="CHEBI:57783"/>
        <dbReference type="ChEBI" id="CHEBI:57945"/>
        <dbReference type="ChEBI" id="CHEBI:58349"/>
        <dbReference type="EC" id="1.6.1.1"/>
    </reaction>
</comment>
<comment type="cofactor">
    <cofactor evidence="1">
        <name>FAD</name>
        <dbReference type="ChEBI" id="CHEBI:57692"/>
    </cofactor>
    <text evidence="1">Binds 1 FAD per subunit.</text>
</comment>
<comment type="subcellular location">
    <subcellularLocation>
        <location evidence="1">Cytoplasm</location>
    </subcellularLocation>
</comment>
<comment type="similarity">
    <text evidence="1">Belongs to the class-I pyridine nucleotide-disulfide oxidoreductase family.</text>
</comment>
<accession>A1KM51</accession>
<proteinExistence type="inferred from homology"/>
<organism>
    <name type="scientific">Mycobacterium bovis (strain BCG / Pasteur 1173P2)</name>
    <dbReference type="NCBI Taxonomy" id="410289"/>
    <lineage>
        <taxon>Bacteria</taxon>
        <taxon>Bacillati</taxon>
        <taxon>Actinomycetota</taxon>
        <taxon>Actinomycetes</taxon>
        <taxon>Mycobacteriales</taxon>
        <taxon>Mycobacteriaceae</taxon>
        <taxon>Mycobacterium</taxon>
        <taxon>Mycobacterium tuberculosis complex</taxon>
    </lineage>
</organism>
<keyword id="KW-0963">Cytoplasm</keyword>
<keyword id="KW-0274">FAD</keyword>
<keyword id="KW-0285">Flavoprotein</keyword>
<keyword id="KW-0520">NAD</keyword>
<keyword id="KW-0521">NADP</keyword>
<keyword id="KW-0560">Oxidoreductase</keyword>
<evidence type="ECO:0000255" key="1">
    <source>
        <dbReference type="HAMAP-Rule" id="MF_00247"/>
    </source>
</evidence>
<name>STHA_MYCBP</name>
<feature type="chain" id="PRO_1000012559" description="Soluble pyridine nucleotide transhydrogenase">
    <location>
        <begin position="1"/>
        <end position="468"/>
    </location>
</feature>
<feature type="binding site" evidence="1">
    <location>
        <begin position="33"/>
        <end position="42"/>
    </location>
    <ligand>
        <name>FAD</name>
        <dbReference type="ChEBI" id="CHEBI:57692"/>
    </ligand>
</feature>
<sequence length="468" mass="50754">MREYDIVVIGSGPGGQKAAIASAKLGKSVAIVERGRMLGGVCVNTGTIPSKTLREAVLYLTGMNQRELYGASYRVKDRITPADLLARTQHVIGKEVDVVRNQLMRNRVDLIVGHGRFIDPHTILVEDQARREKTTVTGDYIIIATGTRPARPSGVEFDEERVLDSDGILDLKSLPSSMVVVGAGVIGIEYASMFAALGTKVTVVEKRDNMLDFCDPEVVEALKFHLRDLAVTFRFGEEVTAVDVGSAGTVTTLASGKQIPAETVMYSAGRQGQTDHLDLHNAGLEVQGRGRIFVDDRFQTKVDHIYAVGDVIGFPALAATSMEQGRLAAYHAFGEPTDGITELQPIGIYSIPEVSYVGATEVELTKSSIPYEVGVARYRELARGQIAGDSYGMLKLLVSTEDLKLLGVHIFGTSATEMVHIGQAVMGCGGSVEYLVDAVFNYPTFSEAYKNAALDVMNKMRALNQFRR</sequence>